<organism>
    <name type="scientific">Mycobacterium avium</name>
    <dbReference type="NCBI Taxonomy" id="1764"/>
    <lineage>
        <taxon>Bacteria</taxon>
        <taxon>Bacillati</taxon>
        <taxon>Actinomycetota</taxon>
        <taxon>Actinomycetes</taxon>
        <taxon>Mycobacteriales</taxon>
        <taxon>Mycobacteriaceae</taxon>
        <taxon>Mycobacterium</taxon>
        <taxon>Mycobacterium avium complex (MAC)</taxon>
    </lineage>
</organism>
<protein>
    <recommendedName>
        <fullName>Uncharacterized protein MAV321</fullName>
    </recommendedName>
</protein>
<evidence type="ECO:0000305" key="1"/>
<feature type="chain" id="PRO_0000103854" description="Uncharacterized protein MAV321">
    <location>
        <begin position="1"/>
        <end position="306"/>
    </location>
</feature>
<dbReference type="EMBL" id="AF002133">
    <property type="protein sequence ID" value="AAC46206.1"/>
    <property type="status" value="ALT_INIT"/>
    <property type="molecule type" value="Genomic_DNA"/>
</dbReference>
<proteinExistence type="predicted"/>
<comment type="similarity">
    <text evidence="1">To M.tuberculosis Rv1486c, M.bovis Mb1522c and M.leprae ML1804.</text>
</comment>
<comment type="sequence caution" evidence="1">
    <conflict type="erroneous initiation">
        <sequence resource="EMBL-CDS" id="AAC46206"/>
    </conflict>
</comment>
<reference key="1">
    <citation type="journal article" date="1998" name="Microbiology">
        <title>Determination of a 15437 bp nucleotide sequence around the inhA gene of Mycobacterium avium and similarity analysis of the products of putative ORFs.</title>
        <authorList>
            <person name="Labo M."/>
            <person name="Gusberti L."/>
            <person name="de Rossi E."/>
            <person name="Speziale P."/>
            <person name="Riccardi G."/>
        </authorList>
    </citation>
    <scope>NUCLEOTIDE SEQUENCE [GENOMIC DNA]</scope>
    <source>
        <strain>GIR10</strain>
    </source>
</reference>
<sequence>MWCPSVSLSLWANAWLAGKASAPTSLRRVIVWAPKQSVTAYDAVAAGHTGLPWPDVHDAGTVTLLQTARHDRRAGGLRTDARTINVVLPVPGDVRGLAPGTQFEQDALAAGEAVIVSNPHQPGAAVGLVPEFCYADDDDGSQDYALTELCALSWTVYSLPGAPVLDHHELGDASYTLRSAVRSAAETLGAIGLGSAASDVDDPRGLVQQLLESARQHRIPDQPPSPLRVLENRAHVDAIIAVSAGLSRSDSPDRFAAPIAAGLEPLGTQSSSEARIAGDPVRPLTAVVRSARMAAVTAILHSAWGD</sequence>
<name>YE86_MYCAV</name>
<accession>O07402</accession>